<dbReference type="EC" id="3.4.24.78" evidence="1"/>
<dbReference type="EMBL" id="CP000312">
    <property type="protein sequence ID" value="ABG87065.1"/>
    <property type="molecule type" value="Genomic_DNA"/>
</dbReference>
<dbReference type="RefSeq" id="WP_011592869.1">
    <property type="nucleotide sequence ID" value="NC_008262.1"/>
</dbReference>
<dbReference type="SMR" id="Q0SRD5"/>
<dbReference type="MEROPS" id="A25.001"/>
<dbReference type="KEGG" id="cpr:CPR_2013"/>
<dbReference type="Proteomes" id="UP000001824">
    <property type="component" value="Chromosome"/>
</dbReference>
<dbReference type="GO" id="GO:0004222">
    <property type="term" value="F:metalloendopeptidase activity"/>
    <property type="evidence" value="ECO:0007669"/>
    <property type="project" value="UniProtKB-UniRule"/>
</dbReference>
<dbReference type="GO" id="GO:0006508">
    <property type="term" value="P:proteolysis"/>
    <property type="evidence" value="ECO:0007669"/>
    <property type="project" value="UniProtKB-UniRule"/>
</dbReference>
<dbReference type="GO" id="GO:0009847">
    <property type="term" value="P:spore germination"/>
    <property type="evidence" value="ECO:0007669"/>
    <property type="project" value="UniProtKB-UniRule"/>
</dbReference>
<dbReference type="Gene3D" id="3.40.50.1450">
    <property type="entry name" value="HybD-like"/>
    <property type="match status" value="1"/>
</dbReference>
<dbReference type="HAMAP" id="MF_00626">
    <property type="entry name" value="Germination_prot"/>
    <property type="match status" value="1"/>
</dbReference>
<dbReference type="InterPro" id="IPR023430">
    <property type="entry name" value="Pept_HybD-like_dom_sf"/>
</dbReference>
<dbReference type="InterPro" id="IPR005080">
    <property type="entry name" value="Peptidase_A25"/>
</dbReference>
<dbReference type="NCBIfam" id="TIGR01441">
    <property type="entry name" value="GPR"/>
    <property type="match status" value="1"/>
</dbReference>
<dbReference type="Pfam" id="PF03418">
    <property type="entry name" value="Peptidase_A25"/>
    <property type="match status" value="2"/>
</dbReference>
<dbReference type="PIRSF" id="PIRSF019549">
    <property type="entry name" value="Peptidase_A25"/>
    <property type="match status" value="1"/>
</dbReference>
<dbReference type="SUPFAM" id="SSF53163">
    <property type="entry name" value="HybD-like"/>
    <property type="match status" value="1"/>
</dbReference>
<sequence length="325" mass="35620">MYNVRTDLAVESREIYKHRYNREIDGVVFEEKTVEEDIKVTNVDILNEEGAKAMEKPIGRYVTIDIPDYTHYDGGIMDEVSHVVAASLEELINLPEERTALVVGLGNWNVTPDAIGPKVVGKLMVTRHLKKVMPDIIDDSVRPVCAIAPGVLGITGIETGEIIKSLVEKIKPDLVVCIDALASRKLERVARTIQISNTGISPGAGVGNHRMQINEESLGIPVIALGVPTVVDAATIANDAMDLVLDEMINQADAGKEFYNILNNIDKNEKGMMIKSLLDPYVGDLMVTPKEIDDIIESVSKIIANGINIALQPNMVLEDINKFLN</sequence>
<organism>
    <name type="scientific">Clostridium perfringens (strain SM101 / Type A)</name>
    <dbReference type="NCBI Taxonomy" id="289380"/>
    <lineage>
        <taxon>Bacteria</taxon>
        <taxon>Bacillati</taxon>
        <taxon>Bacillota</taxon>
        <taxon>Clostridia</taxon>
        <taxon>Eubacteriales</taxon>
        <taxon>Clostridiaceae</taxon>
        <taxon>Clostridium</taxon>
    </lineage>
</organism>
<reference key="1">
    <citation type="journal article" date="2006" name="Genome Res.">
        <title>Skewed genomic variability in strains of the toxigenic bacterial pathogen, Clostridium perfringens.</title>
        <authorList>
            <person name="Myers G.S.A."/>
            <person name="Rasko D.A."/>
            <person name="Cheung J.K."/>
            <person name="Ravel J."/>
            <person name="Seshadri R."/>
            <person name="DeBoy R.T."/>
            <person name="Ren Q."/>
            <person name="Varga J."/>
            <person name="Awad M.M."/>
            <person name="Brinkac L.M."/>
            <person name="Daugherty S.C."/>
            <person name="Haft D.H."/>
            <person name="Dodson R.J."/>
            <person name="Madupu R."/>
            <person name="Nelson W.C."/>
            <person name="Rosovitz M.J."/>
            <person name="Sullivan S.A."/>
            <person name="Khouri H."/>
            <person name="Dimitrov G.I."/>
            <person name="Watkins K.L."/>
            <person name="Mulligan S."/>
            <person name="Benton J."/>
            <person name="Radune D."/>
            <person name="Fisher D.J."/>
            <person name="Atkins H.S."/>
            <person name="Hiscox T."/>
            <person name="Jost B.H."/>
            <person name="Billington S.J."/>
            <person name="Songer J.G."/>
            <person name="McClane B.A."/>
            <person name="Titball R.W."/>
            <person name="Rood J.I."/>
            <person name="Melville S.B."/>
            <person name="Paulsen I.T."/>
        </authorList>
    </citation>
    <scope>NUCLEOTIDE SEQUENCE [LARGE SCALE GENOMIC DNA]</scope>
    <source>
        <strain>SM101 / Type A</strain>
    </source>
</reference>
<proteinExistence type="inferred from homology"/>
<gene>
    <name evidence="1" type="primary">gpr</name>
    <name type="ordered locus">CPR_2013</name>
</gene>
<feature type="propeptide" id="PRO_0000316072" evidence="1">
    <location>
        <begin position="1"/>
        <end position="7"/>
    </location>
</feature>
<feature type="chain" id="PRO_1000051611" description="Germination protease">
    <location>
        <begin position="8"/>
        <end position="325"/>
    </location>
</feature>
<accession>Q0SRD5</accession>
<evidence type="ECO:0000255" key="1">
    <source>
        <dbReference type="HAMAP-Rule" id="MF_00626"/>
    </source>
</evidence>
<comment type="function">
    <text evidence="1">Initiates the rapid degradation of small, acid-soluble proteins during spore germination.</text>
</comment>
<comment type="catalytic activity">
    <reaction evidence="1">
        <text>Endopeptidase action with P4 Glu or Asp, P1 preferably Glu &gt; Asp, P1' hydrophobic and P2' Ala.</text>
        <dbReference type="EC" id="3.4.24.78"/>
    </reaction>
</comment>
<comment type="subunit">
    <text evidence="1">Homotetramer.</text>
</comment>
<comment type="PTM">
    <text evidence="1">Autoproteolytically processed. The inactive tetrameric zymogen termed p46 autoprocesses to a smaller form termed p41, which is active only during spore germination.</text>
</comment>
<comment type="similarity">
    <text evidence="1">Belongs to the peptidase A25 family.</text>
</comment>
<keyword id="KW-0378">Hydrolase</keyword>
<keyword id="KW-0645">Protease</keyword>
<keyword id="KW-0865">Zymogen</keyword>
<name>GPR_CLOPS</name>
<protein>
    <recommendedName>
        <fullName evidence="1">Germination protease</fullName>
        <ecNumber evidence="1">3.4.24.78</ecNumber>
    </recommendedName>
    <alternativeName>
        <fullName evidence="1">GPR endopeptidase</fullName>
    </alternativeName>
    <alternativeName>
        <fullName evidence="1">Germination proteinase</fullName>
    </alternativeName>
    <alternativeName>
        <fullName evidence="1">Spore protease</fullName>
    </alternativeName>
</protein>